<gene>
    <name type="ordered locus">CKR_1028</name>
</gene>
<reference key="1">
    <citation type="submission" date="2005-09" db="EMBL/GenBank/DDBJ databases">
        <title>Complete genome sequence of Clostridium kluyveri and comparative genomics of Clostridia species.</title>
        <authorList>
            <person name="Inui M."/>
            <person name="Nonaka H."/>
            <person name="Shinoda Y."/>
            <person name="Ikenaga Y."/>
            <person name="Abe M."/>
            <person name="Naito K."/>
            <person name="Vertes A.A."/>
            <person name="Yukawa H."/>
        </authorList>
    </citation>
    <scope>NUCLEOTIDE SEQUENCE [LARGE SCALE GENOMIC DNA]</scope>
    <source>
        <strain>NBRC 12016</strain>
    </source>
</reference>
<evidence type="ECO:0000255" key="1">
    <source>
        <dbReference type="HAMAP-Rule" id="MF_01874"/>
    </source>
</evidence>
<comment type="subcellular location">
    <subcellularLocation>
        <location evidence="1">Cell membrane</location>
        <topology evidence="1">Multi-pass membrane protein</topology>
    </subcellularLocation>
</comment>
<comment type="similarity">
    <text evidence="1">Belongs to the UPF0756 family.</text>
</comment>
<dbReference type="EMBL" id="AP009049">
    <property type="protein sequence ID" value="BAH06079.1"/>
    <property type="molecule type" value="Genomic_DNA"/>
</dbReference>
<dbReference type="RefSeq" id="WP_012101507.1">
    <property type="nucleotide sequence ID" value="NC_011837.1"/>
</dbReference>
<dbReference type="KEGG" id="ckr:CKR_1028"/>
<dbReference type="HOGENOM" id="CLU_125889_1_0_9"/>
<dbReference type="Proteomes" id="UP000007969">
    <property type="component" value="Chromosome"/>
</dbReference>
<dbReference type="GO" id="GO:0005886">
    <property type="term" value="C:plasma membrane"/>
    <property type="evidence" value="ECO:0007669"/>
    <property type="project" value="UniProtKB-SubCell"/>
</dbReference>
<dbReference type="HAMAP" id="MF_01874">
    <property type="entry name" value="UPF0756"/>
    <property type="match status" value="1"/>
</dbReference>
<dbReference type="InterPro" id="IPR007382">
    <property type="entry name" value="UPF0756_TM"/>
</dbReference>
<dbReference type="PANTHER" id="PTHR38452">
    <property type="entry name" value="UPF0756 MEMBRANE PROTEIN YEAL"/>
    <property type="match status" value="1"/>
</dbReference>
<dbReference type="PANTHER" id="PTHR38452:SF1">
    <property type="entry name" value="UPF0756 MEMBRANE PROTEIN YEAL"/>
    <property type="match status" value="1"/>
</dbReference>
<dbReference type="Pfam" id="PF04284">
    <property type="entry name" value="DUF441"/>
    <property type="match status" value="1"/>
</dbReference>
<keyword id="KW-1003">Cell membrane</keyword>
<keyword id="KW-0472">Membrane</keyword>
<keyword id="KW-0812">Transmembrane</keyword>
<keyword id="KW-1133">Transmembrane helix</keyword>
<name>Y1028_CLOK1</name>
<protein>
    <recommendedName>
        <fullName evidence="1">UPF0756 membrane protein CKR_1028</fullName>
    </recommendedName>
</protein>
<sequence length="154" mass="16312">MESTIILIIILTASVLGRANSVALATCFLLILKLLNADKFIFPYLQENGLFLGLVILIASILIPIADGKVSYISIRNVFTSWLGIFALLVSLFTTYLSGLGMNYLTIQGHSEIMPALILGAVIAAAFLGGVPVGPMITSGLIALGLKLFNKIGS</sequence>
<feature type="chain" id="PRO_0000388843" description="UPF0756 membrane protein CKR_1028">
    <location>
        <begin position="1"/>
        <end position="154"/>
    </location>
</feature>
<feature type="transmembrane region" description="Helical" evidence="1">
    <location>
        <begin position="5"/>
        <end position="25"/>
    </location>
</feature>
<feature type="transmembrane region" description="Helical" evidence="1">
    <location>
        <begin position="48"/>
        <end position="68"/>
    </location>
</feature>
<feature type="transmembrane region" description="Helical" evidence="1">
    <location>
        <begin position="82"/>
        <end position="102"/>
    </location>
</feature>
<feature type="transmembrane region" description="Helical" evidence="1">
    <location>
        <begin position="113"/>
        <end position="133"/>
    </location>
</feature>
<accession>B9E0Q4</accession>
<organism>
    <name type="scientific">Clostridium kluyveri (strain NBRC 12016)</name>
    <dbReference type="NCBI Taxonomy" id="583346"/>
    <lineage>
        <taxon>Bacteria</taxon>
        <taxon>Bacillati</taxon>
        <taxon>Bacillota</taxon>
        <taxon>Clostridia</taxon>
        <taxon>Eubacteriales</taxon>
        <taxon>Clostridiaceae</taxon>
        <taxon>Clostridium</taxon>
    </lineage>
</organism>
<proteinExistence type="inferred from homology"/>